<dbReference type="EC" id="2.7.7.105" evidence="1"/>
<dbReference type="EMBL" id="AM408590">
    <property type="protein sequence ID" value="CAL72993.1"/>
    <property type="molecule type" value="Genomic_DNA"/>
</dbReference>
<dbReference type="SMR" id="A1KMX7"/>
<dbReference type="KEGG" id="mbb:BCG_3004"/>
<dbReference type="HOGENOM" id="CLU_076569_0_0_11"/>
<dbReference type="UniPathway" id="UPA00071"/>
<dbReference type="Proteomes" id="UP000001472">
    <property type="component" value="Chromosome"/>
</dbReference>
<dbReference type="GO" id="GO:0005525">
    <property type="term" value="F:GTP binding"/>
    <property type="evidence" value="ECO:0007669"/>
    <property type="project" value="UniProtKB-KW"/>
</dbReference>
<dbReference type="GO" id="GO:0043814">
    <property type="term" value="F:phospholactate guanylyltransferase activity"/>
    <property type="evidence" value="ECO:0007669"/>
    <property type="project" value="InterPro"/>
</dbReference>
<dbReference type="GO" id="GO:0052645">
    <property type="term" value="P:F420-0 metabolic process"/>
    <property type="evidence" value="ECO:0007669"/>
    <property type="project" value="UniProtKB-UniRule"/>
</dbReference>
<dbReference type="FunFam" id="3.90.550.10:FF:000190">
    <property type="entry name" value="2-phospho-L-lactate guanylyltransferase"/>
    <property type="match status" value="1"/>
</dbReference>
<dbReference type="Gene3D" id="3.90.550.10">
    <property type="entry name" value="Spore Coat Polysaccharide Biosynthesis Protein SpsA, Chain A"/>
    <property type="match status" value="1"/>
</dbReference>
<dbReference type="HAMAP" id="MF_02114">
    <property type="entry name" value="CofC"/>
    <property type="match status" value="1"/>
</dbReference>
<dbReference type="InterPro" id="IPR002835">
    <property type="entry name" value="CofC"/>
</dbReference>
<dbReference type="InterPro" id="IPR029044">
    <property type="entry name" value="Nucleotide-diphossugar_trans"/>
</dbReference>
<dbReference type="NCBIfam" id="TIGR03552">
    <property type="entry name" value="F420_cofC"/>
    <property type="match status" value="1"/>
</dbReference>
<dbReference type="PANTHER" id="PTHR40392">
    <property type="entry name" value="2-PHOSPHO-L-LACTATE GUANYLYLTRANSFERASE"/>
    <property type="match status" value="1"/>
</dbReference>
<dbReference type="PANTHER" id="PTHR40392:SF1">
    <property type="entry name" value="2-PHOSPHO-L-LACTATE GUANYLYLTRANSFERASE"/>
    <property type="match status" value="1"/>
</dbReference>
<dbReference type="Pfam" id="PF01983">
    <property type="entry name" value="CofC"/>
    <property type="match status" value="1"/>
</dbReference>
<dbReference type="SUPFAM" id="SSF53448">
    <property type="entry name" value="Nucleotide-diphospho-sugar transferases"/>
    <property type="match status" value="1"/>
</dbReference>
<gene>
    <name evidence="1" type="primary">fbiD</name>
    <name type="ordered locus">BCG_3004</name>
</gene>
<sequence>MSGTPDDGDIGLIIAVKRLAAAKTRLAPVFSAQTRENVVLAMLVDTLTAAAGVGSLRSITVITPDEAAAAAAAGLGADVLADPTPEDDPDPLNTAITAAERVVAEGASNIVVLQGDLPALQTQELAEAISAARHHRRSFVADRLGTGTAVLCAFGTALHPRFGPDSSARHRRSGAVELTGAWPGLRCDVDTPADLTAARQLGVGPATARAVAHR</sequence>
<comment type="function">
    <text evidence="1">Guanylyltransferase that catalyzes the activation of phosphoenolpyruvate (PEP) as enolpyruvoyl-2-diphospho-5'-guanosine, via the condensation of PEP with GTP. It is involved in the biosynthesis of coenzyme F420, a hydride carrier cofactor.</text>
</comment>
<comment type="catalytic activity">
    <reaction evidence="1">
        <text>phosphoenolpyruvate + GTP + H(+) = enolpyruvoyl-2-diphospho-5'-guanosine + diphosphate</text>
        <dbReference type="Rhea" id="RHEA:30519"/>
        <dbReference type="ChEBI" id="CHEBI:15378"/>
        <dbReference type="ChEBI" id="CHEBI:33019"/>
        <dbReference type="ChEBI" id="CHEBI:37565"/>
        <dbReference type="ChEBI" id="CHEBI:58702"/>
        <dbReference type="ChEBI" id="CHEBI:143701"/>
        <dbReference type="EC" id="2.7.7.105"/>
    </reaction>
</comment>
<comment type="pathway">
    <text evidence="1">Cofactor biosynthesis; coenzyme F420 biosynthesis.</text>
</comment>
<comment type="similarity">
    <text evidence="1">Belongs to the CofC family.</text>
</comment>
<organism>
    <name type="scientific">Mycobacterium bovis (strain BCG / Pasteur 1173P2)</name>
    <dbReference type="NCBI Taxonomy" id="410289"/>
    <lineage>
        <taxon>Bacteria</taxon>
        <taxon>Bacillati</taxon>
        <taxon>Actinomycetota</taxon>
        <taxon>Actinomycetes</taxon>
        <taxon>Mycobacteriales</taxon>
        <taxon>Mycobacteriaceae</taxon>
        <taxon>Mycobacterium</taxon>
        <taxon>Mycobacterium tuberculosis complex</taxon>
    </lineage>
</organism>
<protein>
    <recommendedName>
        <fullName evidence="1">Phosphoenolpyruvate guanylyltransferase</fullName>
        <shortName evidence="1">PEP guanylyltransferase</shortName>
        <ecNumber evidence="1">2.7.7.105</ecNumber>
    </recommendedName>
</protein>
<reference key="1">
    <citation type="journal article" date="2007" name="Proc. Natl. Acad. Sci. U.S.A.">
        <title>Genome plasticity of BCG and impact on vaccine efficacy.</title>
        <authorList>
            <person name="Brosch R."/>
            <person name="Gordon S.V."/>
            <person name="Garnier T."/>
            <person name="Eiglmeier K."/>
            <person name="Frigui W."/>
            <person name="Valenti P."/>
            <person name="Dos Santos S."/>
            <person name="Duthoy S."/>
            <person name="Lacroix C."/>
            <person name="Garcia-Pelayo C."/>
            <person name="Inwald J.K."/>
            <person name="Golby P."/>
            <person name="Garcia J.N."/>
            <person name="Hewinson R.G."/>
            <person name="Behr M.A."/>
            <person name="Quail M.A."/>
            <person name="Churcher C."/>
            <person name="Barrell B.G."/>
            <person name="Parkhill J."/>
            <person name="Cole S.T."/>
        </authorList>
    </citation>
    <scope>NUCLEOTIDE SEQUENCE [LARGE SCALE GENOMIC DNA]</scope>
    <source>
        <strain>BCG / Pasteur 1173P2</strain>
    </source>
</reference>
<accession>A1KMX7</accession>
<keyword id="KW-0342">GTP-binding</keyword>
<keyword id="KW-0547">Nucleotide-binding</keyword>
<keyword id="KW-0548">Nucleotidyltransferase</keyword>
<keyword id="KW-0808">Transferase</keyword>
<proteinExistence type="inferred from homology"/>
<evidence type="ECO:0000255" key="1">
    <source>
        <dbReference type="HAMAP-Rule" id="MF_02114"/>
    </source>
</evidence>
<name>FBID_MYCBP</name>
<feature type="chain" id="PRO_0000398688" description="Phosphoenolpyruvate guanylyltransferase">
    <location>
        <begin position="1"/>
        <end position="214"/>
    </location>
</feature>
<feature type="binding site" evidence="1">
    <location>
        <position position="148"/>
    </location>
    <ligand>
        <name>phosphoenolpyruvate</name>
        <dbReference type="ChEBI" id="CHEBI:58702"/>
    </ligand>
</feature>
<feature type="binding site" evidence="1">
    <location>
        <position position="163"/>
    </location>
    <ligand>
        <name>phosphoenolpyruvate</name>
        <dbReference type="ChEBI" id="CHEBI:58702"/>
    </ligand>
</feature>
<feature type="binding site" evidence="1">
    <location>
        <position position="166"/>
    </location>
    <ligand>
        <name>phosphoenolpyruvate</name>
        <dbReference type="ChEBI" id="CHEBI:58702"/>
    </ligand>
</feature>